<dbReference type="EC" id="3.1.-.-" evidence="5"/>
<dbReference type="EMBL" id="U26404">
    <property type="protein sequence ID" value="AAA85165.1"/>
    <property type="molecule type" value="mRNA"/>
</dbReference>
<dbReference type="RefSeq" id="NP_001079262.1">
    <property type="nucleotide sequence ID" value="NM_001085793.1"/>
</dbReference>
<dbReference type="SMR" id="Q91612"/>
<dbReference type="MEROPS" id="C46.003"/>
<dbReference type="GeneID" id="378540"/>
<dbReference type="KEGG" id="xla:378540"/>
<dbReference type="AGR" id="Xenbase:XB-GENE-865057"/>
<dbReference type="CTD" id="378540"/>
<dbReference type="Xenbase" id="XB-GENE-865057">
    <property type="gene designation" value="ihh.S"/>
</dbReference>
<dbReference type="OMA" id="PQLAHWA"/>
<dbReference type="OrthoDB" id="5212at2759"/>
<dbReference type="Proteomes" id="UP000186698">
    <property type="component" value="Chromosome 9_10S"/>
</dbReference>
<dbReference type="Bgee" id="378540">
    <property type="expression patterns" value="Expressed in camera-type eye and 7 other cell types or tissues"/>
</dbReference>
<dbReference type="GO" id="GO:0005789">
    <property type="term" value="C:endoplasmic reticulum membrane"/>
    <property type="evidence" value="ECO:0007669"/>
    <property type="project" value="UniProtKB-SubCell"/>
</dbReference>
<dbReference type="GO" id="GO:0005615">
    <property type="term" value="C:extracellular space"/>
    <property type="evidence" value="ECO:0000318"/>
    <property type="project" value="GO_Central"/>
</dbReference>
<dbReference type="GO" id="GO:0000139">
    <property type="term" value="C:Golgi membrane"/>
    <property type="evidence" value="ECO:0007669"/>
    <property type="project" value="UniProtKB-SubCell"/>
</dbReference>
<dbReference type="GO" id="GO:0005886">
    <property type="term" value="C:plasma membrane"/>
    <property type="evidence" value="ECO:0007669"/>
    <property type="project" value="UniProtKB-SubCell"/>
</dbReference>
<dbReference type="GO" id="GO:0005509">
    <property type="term" value="F:calcium ion binding"/>
    <property type="evidence" value="ECO:0000318"/>
    <property type="project" value="GO_Central"/>
</dbReference>
<dbReference type="GO" id="GO:0140853">
    <property type="term" value="F:cholesterol-protein transferase activity"/>
    <property type="evidence" value="ECO:0000250"/>
    <property type="project" value="UniProtKB"/>
</dbReference>
<dbReference type="GO" id="GO:0005113">
    <property type="term" value="F:patched binding"/>
    <property type="evidence" value="ECO:0000250"/>
    <property type="project" value="UniProtKB"/>
</dbReference>
<dbReference type="GO" id="GO:0008233">
    <property type="term" value="F:peptidase activity"/>
    <property type="evidence" value="ECO:0000250"/>
    <property type="project" value="UniProtKB"/>
</dbReference>
<dbReference type="GO" id="GO:0034189">
    <property type="term" value="F:very-low-density lipoprotein particle binding"/>
    <property type="evidence" value="ECO:0000250"/>
    <property type="project" value="UniProtKB"/>
</dbReference>
<dbReference type="GO" id="GO:0001708">
    <property type="term" value="P:cell fate specification"/>
    <property type="evidence" value="ECO:0000318"/>
    <property type="project" value="GO_Central"/>
</dbReference>
<dbReference type="GO" id="GO:0007267">
    <property type="term" value="P:cell-cell signaling"/>
    <property type="evidence" value="ECO:0007669"/>
    <property type="project" value="InterPro"/>
</dbReference>
<dbReference type="GO" id="GO:0045880">
    <property type="term" value="P:positive regulation of smoothened signaling pathway"/>
    <property type="evidence" value="ECO:0000250"/>
    <property type="project" value="UniProtKB"/>
</dbReference>
<dbReference type="GO" id="GO:0016540">
    <property type="term" value="P:protein autoprocessing"/>
    <property type="evidence" value="ECO:0007669"/>
    <property type="project" value="InterPro"/>
</dbReference>
<dbReference type="GO" id="GO:0010468">
    <property type="term" value="P:regulation of gene expression"/>
    <property type="evidence" value="ECO:0000318"/>
    <property type="project" value="GO_Central"/>
</dbReference>
<dbReference type="GO" id="GO:0097264">
    <property type="term" value="P:self proteolysis"/>
    <property type="evidence" value="ECO:0000250"/>
    <property type="project" value="UniProtKB"/>
</dbReference>
<dbReference type="GO" id="GO:0007224">
    <property type="term" value="P:smoothened signaling pathway"/>
    <property type="evidence" value="ECO:0000318"/>
    <property type="project" value="GO_Central"/>
</dbReference>
<dbReference type="CDD" id="cd00081">
    <property type="entry name" value="Hint"/>
    <property type="match status" value="1"/>
</dbReference>
<dbReference type="FunFam" id="2.170.16.10:FF:000001">
    <property type="entry name" value="Indian hedgehog"/>
    <property type="match status" value="1"/>
</dbReference>
<dbReference type="FunFam" id="3.30.1380.10:FF:000001">
    <property type="entry name" value="Indian hedgehog"/>
    <property type="match status" value="1"/>
</dbReference>
<dbReference type="Gene3D" id="3.30.1380.10">
    <property type="match status" value="1"/>
</dbReference>
<dbReference type="Gene3D" id="2.170.16.10">
    <property type="entry name" value="Hedgehog/Intein (Hint) domain"/>
    <property type="match status" value="1"/>
</dbReference>
<dbReference type="InterPro" id="IPR001657">
    <property type="entry name" value="Hedgehog"/>
</dbReference>
<dbReference type="InterPro" id="IPR001767">
    <property type="entry name" value="Hedgehog_Hint"/>
</dbReference>
<dbReference type="InterPro" id="IPR009045">
    <property type="entry name" value="Hedgehog_sig/DD-Pept_Zn-bd_sf"/>
</dbReference>
<dbReference type="InterPro" id="IPR050387">
    <property type="entry name" value="Hedgehog_Signaling"/>
</dbReference>
<dbReference type="InterPro" id="IPR000320">
    <property type="entry name" value="Hedgehog_signalling_dom"/>
</dbReference>
<dbReference type="InterPro" id="IPR003586">
    <property type="entry name" value="Hint_dom_C"/>
</dbReference>
<dbReference type="InterPro" id="IPR003587">
    <property type="entry name" value="Hint_dom_N"/>
</dbReference>
<dbReference type="InterPro" id="IPR036844">
    <property type="entry name" value="Hint_dom_sf"/>
</dbReference>
<dbReference type="PANTHER" id="PTHR11889">
    <property type="entry name" value="HEDGEHOG"/>
    <property type="match status" value="1"/>
</dbReference>
<dbReference type="PANTHER" id="PTHR11889:SF39">
    <property type="entry name" value="INDIAN HEDGEHOG PROTEIN"/>
    <property type="match status" value="1"/>
</dbReference>
<dbReference type="Pfam" id="PF01085">
    <property type="entry name" value="HH_signal"/>
    <property type="match status" value="1"/>
</dbReference>
<dbReference type="Pfam" id="PF01079">
    <property type="entry name" value="Hint"/>
    <property type="match status" value="1"/>
</dbReference>
<dbReference type="PIRSF" id="PIRSF009400">
    <property type="entry name" value="Peptidase_C46"/>
    <property type="match status" value="1"/>
</dbReference>
<dbReference type="PRINTS" id="PR00632">
    <property type="entry name" value="SONICHHOG"/>
</dbReference>
<dbReference type="SMART" id="SM00305">
    <property type="entry name" value="HintC"/>
    <property type="match status" value="1"/>
</dbReference>
<dbReference type="SMART" id="SM00306">
    <property type="entry name" value="HintN"/>
    <property type="match status" value="1"/>
</dbReference>
<dbReference type="SUPFAM" id="SSF55166">
    <property type="entry name" value="Hedgehog/DD-peptidase"/>
    <property type="match status" value="1"/>
</dbReference>
<dbReference type="SUPFAM" id="SSF51294">
    <property type="entry name" value="Hedgehog/intein (Hint) domain"/>
    <property type="match status" value="1"/>
</dbReference>
<reference key="1">
    <citation type="journal article" date="1995" name="Development">
        <title>Distinct expression and shared activities of members of the hedgehog gene family of Xenopus laevis.</title>
        <authorList>
            <person name="Ekker S.C."/>
            <person name="McGrew L.L."/>
            <person name="Lai C.-J."/>
            <person name="Lee J.J."/>
            <person name="von Kessler D.P."/>
            <person name="Moon R.T."/>
            <person name="Beachy P.A."/>
        </authorList>
    </citation>
    <scope>NUCLEOTIDE SEQUENCE [MRNA]</scope>
    <scope>TISSUE SPECIFICITY</scope>
    <scope>DEVELOPMENTAL STAGE</scope>
    <scope>FUNCTION</scope>
    <scope>INDUCTION</scope>
    <source>
        <tissue>Embryo</tissue>
    </source>
</reference>
<gene>
    <name evidence="3" type="primary">ihh</name>
    <name type="synonym">bhh</name>
</gene>
<sequence>MQLPKVVLLLCAAALLLSGAVRGCGPGRVVGRRRRPTKLSPLSYKQFSPNVPEKTLGASGRYEGKISRNSERFKELTPNYNPDIIFKDEEITGADRLMTQRCKDRLNSLAISVMNQWPGVKLRVTEGWDEDGHHFEESLHYEGRAVDITTSDRDRNKYGMLARLAVEAGFDWVYYESKAHIHCSVKSEHSAAAKTGGCFPGEALATLESGEKIPVSQLSPGLRVLAMDNSGRPTYSDFLSFLDHSPKEEHMFQVIKTQDPHRRLFLTPAHLIFVSDNYSTPASEFQAVFASSVRPGQYILVSNVVGLIPAKVRSVNTQTNYGAYAPLTQHGTLVVDDVVVSCFALVQKQRLAQIVYWPLRVLYNLGIIAGTQPSQQMGIHWYSKALYHLGRLILHGNEFHPLGIVQLES</sequence>
<evidence type="ECO:0000250" key="1">
    <source>
        <dbReference type="UniProtKB" id="P97812"/>
    </source>
</evidence>
<evidence type="ECO:0000250" key="2">
    <source>
        <dbReference type="UniProtKB" id="Q02936"/>
    </source>
</evidence>
<evidence type="ECO:0000250" key="3">
    <source>
        <dbReference type="UniProtKB" id="Q14623"/>
    </source>
</evidence>
<evidence type="ECO:0000250" key="4">
    <source>
        <dbReference type="UniProtKB" id="Q15465"/>
    </source>
</evidence>
<evidence type="ECO:0000250" key="5">
    <source>
        <dbReference type="UniProtKB" id="Q62226"/>
    </source>
</evidence>
<evidence type="ECO:0000255" key="6"/>
<evidence type="ECO:0000269" key="7">
    <source>
    </source>
</evidence>
<evidence type="ECO:0000305" key="8"/>
<protein>
    <recommendedName>
        <fullName>Indian hedgehog protein</fullName>
        <shortName>IHH</shortName>
        <ecNumber evidence="5">3.1.-.-</ecNumber>
    </recommendedName>
    <alternativeName>
        <fullName>Banded hedgehog protein</fullName>
    </alternativeName>
    <alternativeName>
        <fullName>X-BHH</fullName>
    </alternativeName>
    <component>
        <recommendedName>
            <fullName>Indian hedgehog protein N-product</fullName>
        </recommendedName>
    </component>
</protein>
<feature type="signal peptide" evidence="6">
    <location>
        <begin position="1"/>
        <end position="23"/>
    </location>
</feature>
<feature type="chain" id="PRO_0000013238" description="Indian hedgehog protein">
    <location>
        <begin position="24"/>
        <end position="409"/>
    </location>
</feature>
<feature type="chain" id="PRO_0000013239" description="Indian hedgehog protein N-product">
    <location>
        <begin position="24"/>
        <end position="197"/>
    </location>
</feature>
<feature type="binding site" evidence="3">
    <location>
        <position position="89"/>
    </location>
    <ligand>
        <name>Ca(2+)</name>
        <dbReference type="ChEBI" id="CHEBI:29108"/>
        <label>1</label>
    </ligand>
</feature>
<feature type="binding site" evidence="3">
    <location>
        <position position="90"/>
    </location>
    <ligand>
        <name>Ca(2+)</name>
        <dbReference type="ChEBI" id="CHEBI:29108"/>
        <label>1</label>
    </ligand>
</feature>
<feature type="binding site" evidence="3">
    <location>
        <position position="90"/>
    </location>
    <ligand>
        <name>Ca(2+)</name>
        <dbReference type="ChEBI" id="CHEBI:29108"/>
        <label>2</label>
    </ligand>
</feature>
<feature type="binding site" evidence="3">
    <location>
        <position position="95"/>
    </location>
    <ligand>
        <name>Ca(2+)</name>
        <dbReference type="ChEBI" id="CHEBI:29108"/>
        <label>1</label>
    </ligand>
</feature>
<feature type="binding site" evidence="3">
    <location>
        <position position="125"/>
    </location>
    <ligand>
        <name>Ca(2+)</name>
        <dbReference type="ChEBI" id="CHEBI:29108"/>
        <label>1</label>
    </ligand>
</feature>
<feature type="binding site" evidence="3">
    <location>
        <position position="126"/>
    </location>
    <ligand>
        <name>Ca(2+)</name>
        <dbReference type="ChEBI" id="CHEBI:29108"/>
        <label>1</label>
    </ligand>
</feature>
<feature type="binding site" evidence="3">
    <location>
        <position position="126"/>
    </location>
    <ligand>
        <name>Ca(2+)</name>
        <dbReference type="ChEBI" id="CHEBI:29108"/>
        <label>2</label>
    </ligand>
</feature>
<feature type="binding site" evidence="3">
    <location>
        <position position="129"/>
    </location>
    <ligand>
        <name>Ca(2+)</name>
        <dbReference type="ChEBI" id="CHEBI:29108"/>
        <label>2</label>
    </ligand>
</feature>
<feature type="binding site" evidence="3">
    <location>
        <position position="131"/>
    </location>
    <ligand>
        <name>Ca(2+)</name>
        <dbReference type="ChEBI" id="CHEBI:29108"/>
        <label>2</label>
    </ligand>
</feature>
<feature type="binding site" evidence="3">
    <location>
        <position position="140"/>
    </location>
    <ligand>
        <name>Zn(2+)</name>
        <dbReference type="ChEBI" id="CHEBI:29105"/>
    </ligand>
</feature>
<feature type="binding site" evidence="3">
    <location>
        <position position="147"/>
    </location>
    <ligand>
        <name>Zn(2+)</name>
        <dbReference type="ChEBI" id="CHEBI:29105"/>
    </ligand>
</feature>
<feature type="binding site" evidence="3">
    <location>
        <position position="182"/>
    </location>
    <ligand>
        <name>Zn(2+)</name>
        <dbReference type="ChEBI" id="CHEBI:29105"/>
    </ligand>
</feature>
<feature type="site" description="Cleavage; by autolysis" evidence="2">
    <location>
        <begin position="197"/>
        <end position="198"/>
    </location>
</feature>
<feature type="site" description="Involved in cholesterol transfer" evidence="2">
    <location>
        <position position="243"/>
    </location>
</feature>
<feature type="site" description="Involved in auto-cleavage" evidence="2">
    <location>
        <position position="267"/>
    </location>
</feature>
<feature type="site" description="Essential for auto-cleavage" evidence="2">
    <location>
        <position position="270"/>
    </location>
</feature>
<feature type="lipid moiety-binding region" description="N-palmitoyl cysteine" evidence="3">
    <location>
        <position position="24"/>
    </location>
</feature>
<feature type="lipid moiety-binding region" description="Cholesterol glycine ester" evidence="2">
    <location>
        <position position="197"/>
    </location>
</feature>
<proteinExistence type="evidence at transcript level"/>
<keyword id="KW-0068">Autocatalytic cleavage</keyword>
<keyword id="KW-0106">Calcium</keyword>
<keyword id="KW-1003">Cell membrane</keyword>
<keyword id="KW-0217">Developmental protein</keyword>
<keyword id="KW-0256">Endoplasmic reticulum</keyword>
<keyword id="KW-0333">Golgi apparatus</keyword>
<keyword id="KW-0378">Hydrolase</keyword>
<keyword id="KW-0449">Lipoprotein</keyword>
<keyword id="KW-0472">Membrane</keyword>
<keyword id="KW-0479">Metal-binding</keyword>
<keyword id="KW-0564">Palmitate</keyword>
<keyword id="KW-0645">Protease</keyword>
<keyword id="KW-1185">Reference proteome</keyword>
<keyword id="KW-0964">Secreted</keyword>
<keyword id="KW-0732">Signal</keyword>
<keyword id="KW-0808">Transferase</keyword>
<keyword id="KW-0862">Zinc</keyword>
<name>IHH_XENLA</name>
<organism>
    <name type="scientific">Xenopus laevis</name>
    <name type="common">African clawed frog</name>
    <dbReference type="NCBI Taxonomy" id="8355"/>
    <lineage>
        <taxon>Eukaryota</taxon>
        <taxon>Metazoa</taxon>
        <taxon>Chordata</taxon>
        <taxon>Craniata</taxon>
        <taxon>Vertebrata</taxon>
        <taxon>Euteleostomi</taxon>
        <taxon>Amphibia</taxon>
        <taxon>Batrachia</taxon>
        <taxon>Anura</taxon>
        <taxon>Pipoidea</taxon>
        <taxon>Pipidae</taxon>
        <taxon>Xenopodinae</taxon>
        <taxon>Xenopus</taxon>
        <taxon>Xenopus</taxon>
    </lineage>
</organism>
<accession>Q91612</accession>
<comment type="function">
    <text evidence="1 7">Signal involved in the early induction and patterning of anterodorsal ectoderm, nervous system and somites. Induces ectopic cement gland formation in embryos (PubMed:7671800). It is involved in the regulation of endochondral skeleton formation, and the development of retinal pigment epithelium (RPE), photoreceptors and periocular tissues (By similarity).</text>
</comment>
<comment type="function">
    <molecule>Indian hedgehog protein</molecule>
    <text evidence="5">The C-terminal part of the indian hedgehog protein precursor displays an autoproteolysis and a cholesterol transferase activity (By similarity). Both activities result in the cleavage of the full-length protein into two parts followed by the covalent attachment of a cholesterol moiety to the C-terminal of the newly generated N-product (By similarity). Both activities occur in the endoplasmic reticulum (By similarity).</text>
</comment>
<comment type="function">
    <molecule>Indian hedgehog protein N-product</molecule>
    <text evidence="4 5 7">The dually lipidated indian hedgehog protein N-product is a morphogen which is essential for a variety of patterning events during development. Binds to the patched (PTCH1) receptor, which functions in association with smoothened (SMO), to activate the transcription of target genes (By similarity). Signal involved in the early induction and patterning of anterodorsal ectoderm, nervous system and somites. Induces ectopic cement gland formation in embryos (PubMed:7671800).</text>
</comment>
<comment type="catalytic activity">
    <molecule>Indian hedgehog protein</molecule>
    <reaction evidence="5">
        <text>glycyl-L-cysteinyl-[protein] + cholesterol + H(+) = [protein]-C-terminal glycyl cholesterol ester + N-terminal L-cysteinyl-[protein]</text>
        <dbReference type="Rhea" id="RHEA:59504"/>
        <dbReference type="Rhea" id="RHEA-COMP:12707"/>
        <dbReference type="Rhea" id="RHEA-COMP:15369"/>
        <dbReference type="Rhea" id="RHEA-COMP:15374"/>
        <dbReference type="ChEBI" id="CHEBI:15378"/>
        <dbReference type="ChEBI" id="CHEBI:16113"/>
        <dbReference type="ChEBI" id="CHEBI:65250"/>
        <dbReference type="ChEBI" id="CHEBI:143135"/>
        <dbReference type="ChEBI" id="CHEBI:143140"/>
    </reaction>
    <physiologicalReaction direction="left-to-right" evidence="5">
        <dbReference type="Rhea" id="RHEA:59505"/>
    </physiologicalReaction>
</comment>
<comment type="subunit">
    <molecule>Indian hedgehog protein N-product</molecule>
    <text evidence="3">Multimer.</text>
</comment>
<comment type="subunit">
    <text evidence="1 3">Interacts with BOC and CDON. Interacts with PTCH1 (By similarity). Interacts with glypican GPC3 (By similarity).</text>
</comment>
<comment type="subcellular location">
    <molecule>Indian hedgehog protein N-product</molecule>
    <subcellularLocation>
        <location evidence="3">Cell membrane</location>
        <topology evidence="5">Lipid-anchor</topology>
    </subcellularLocation>
    <text evidence="4">The N-product remains associated with the cell surface.</text>
</comment>
<comment type="subcellular location">
    <molecule>Indian hedgehog protein</molecule>
    <subcellularLocation>
        <location evidence="4">Endoplasmic reticulum membrane</location>
    </subcellularLocation>
    <subcellularLocation>
        <location evidence="4">Golgi apparatus membrane</location>
    </subcellularLocation>
    <subcellularLocation>
        <location evidence="3">Secreted</location>
    </subcellularLocation>
    <text evidence="4">Co-localizes with HHAT in the ER and Golgi membrane.</text>
</comment>
<comment type="tissue specificity">
    <text evidence="7">Expressed in the marginal zone at early gastrulation. At stage 14, expression begins in the neural plate with expression becoming more prominent in the anterodorsal area at neural tube closure. At this stage, also expressed diffusely in the somitic and pre-somitic mesoderm. By the early tadpole (stages 28-30), expression is widespread throughout anterior structures with highest levels in the otic vesicle, the eye, and the branchial arches.</text>
</comment>
<comment type="developmental stage">
    <text evidence="7">First expressed by early gastrulation (stage 8). Expression peaks during neural induction and early organogenesis.</text>
</comment>
<comment type="induction">
    <text evidence="7">By activin.</text>
</comment>
<comment type="domain">
    <molecule>Indian hedgehog protein N-product</molecule>
    <text evidence="3">Binds calcium and zinc ions; this stabilizes the protein fold and is essential for protein-protein interactions mediated by this domain.</text>
</comment>
<comment type="PTM">
    <molecule>Indian hedgehog protein N-product</molecule>
    <text evidence="3">Cholesterylation is required for N-product targeting to lipid rafts and multimerization.</text>
</comment>
<comment type="PTM">
    <molecule>Indian hedgehog protein</molecule>
    <text evidence="4 5">The C-terminal domain displays an autoproteolysis activity and a cholesterol transferase activity (By similarity). Both activities result in the cleavage of the full-length protein and covalent attachment of a cholesterol moiety to the C-terminal of the newly generated N-product (By similarity). The N-product is the active species in both local and long-range signaling, whereas the C-product is degraded in the endoplasmic reticulum (By similarity).</text>
</comment>
<comment type="PTM">
    <molecule>Indian hedgehog protein N-product</molecule>
    <text evidence="3">N-palmitoylation by HHAT of N-product is required for indian hedgehog protein N-product multimerization and full activity.</text>
</comment>
<comment type="similarity">
    <text evidence="8">Belongs to the hedgehog family.</text>
</comment>